<dbReference type="EC" id="5.6.1.7" evidence="1"/>
<dbReference type="EMBL" id="CP000282">
    <property type="protein sequence ID" value="ABD80146.1"/>
    <property type="molecule type" value="Genomic_DNA"/>
</dbReference>
<dbReference type="SMR" id="Q21MD3"/>
<dbReference type="STRING" id="203122.Sde_0884"/>
<dbReference type="KEGG" id="sde:Sde_0884"/>
<dbReference type="eggNOG" id="COG0459">
    <property type="taxonomic scope" value="Bacteria"/>
</dbReference>
<dbReference type="HOGENOM" id="CLU_016503_3_0_6"/>
<dbReference type="Proteomes" id="UP000001947">
    <property type="component" value="Chromosome"/>
</dbReference>
<dbReference type="GO" id="GO:0005737">
    <property type="term" value="C:cytoplasm"/>
    <property type="evidence" value="ECO:0007669"/>
    <property type="project" value="UniProtKB-SubCell"/>
</dbReference>
<dbReference type="GO" id="GO:0005524">
    <property type="term" value="F:ATP binding"/>
    <property type="evidence" value="ECO:0007669"/>
    <property type="project" value="UniProtKB-UniRule"/>
</dbReference>
<dbReference type="GO" id="GO:0140662">
    <property type="term" value="F:ATP-dependent protein folding chaperone"/>
    <property type="evidence" value="ECO:0007669"/>
    <property type="project" value="InterPro"/>
</dbReference>
<dbReference type="GO" id="GO:0016853">
    <property type="term" value="F:isomerase activity"/>
    <property type="evidence" value="ECO:0007669"/>
    <property type="project" value="UniProtKB-KW"/>
</dbReference>
<dbReference type="GO" id="GO:0051082">
    <property type="term" value="F:unfolded protein binding"/>
    <property type="evidence" value="ECO:0007669"/>
    <property type="project" value="UniProtKB-UniRule"/>
</dbReference>
<dbReference type="GO" id="GO:0042026">
    <property type="term" value="P:protein refolding"/>
    <property type="evidence" value="ECO:0007669"/>
    <property type="project" value="UniProtKB-UniRule"/>
</dbReference>
<dbReference type="CDD" id="cd03344">
    <property type="entry name" value="GroEL"/>
    <property type="match status" value="1"/>
</dbReference>
<dbReference type="FunFam" id="1.10.560.10:FF:000001">
    <property type="entry name" value="60 kDa chaperonin"/>
    <property type="match status" value="1"/>
</dbReference>
<dbReference type="FunFam" id="3.50.7.10:FF:000001">
    <property type="entry name" value="60 kDa chaperonin"/>
    <property type="match status" value="1"/>
</dbReference>
<dbReference type="Gene3D" id="3.50.7.10">
    <property type="entry name" value="GroEL"/>
    <property type="match status" value="1"/>
</dbReference>
<dbReference type="Gene3D" id="1.10.560.10">
    <property type="entry name" value="GroEL-like equatorial domain"/>
    <property type="match status" value="1"/>
</dbReference>
<dbReference type="Gene3D" id="3.30.260.10">
    <property type="entry name" value="TCP-1-like chaperonin intermediate domain"/>
    <property type="match status" value="1"/>
</dbReference>
<dbReference type="HAMAP" id="MF_00600">
    <property type="entry name" value="CH60"/>
    <property type="match status" value="1"/>
</dbReference>
<dbReference type="InterPro" id="IPR018370">
    <property type="entry name" value="Chaperonin_Cpn60_CS"/>
</dbReference>
<dbReference type="InterPro" id="IPR001844">
    <property type="entry name" value="Cpn60/GroEL"/>
</dbReference>
<dbReference type="InterPro" id="IPR002423">
    <property type="entry name" value="Cpn60/GroEL/TCP-1"/>
</dbReference>
<dbReference type="InterPro" id="IPR027409">
    <property type="entry name" value="GroEL-like_apical_dom_sf"/>
</dbReference>
<dbReference type="InterPro" id="IPR027413">
    <property type="entry name" value="GROEL-like_equatorial_sf"/>
</dbReference>
<dbReference type="InterPro" id="IPR027410">
    <property type="entry name" value="TCP-1-like_intermed_sf"/>
</dbReference>
<dbReference type="NCBIfam" id="TIGR02348">
    <property type="entry name" value="GroEL"/>
    <property type="match status" value="1"/>
</dbReference>
<dbReference type="NCBIfam" id="NF000592">
    <property type="entry name" value="PRK00013.1"/>
    <property type="match status" value="1"/>
</dbReference>
<dbReference type="NCBIfam" id="NF009487">
    <property type="entry name" value="PRK12849.1"/>
    <property type="match status" value="1"/>
</dbReference>
<dbReference type="NCBIfam" id="NF009488">
    <property type="entry name" value="PRK12850.1"/>
    <property type="match status" value="1"/>
</dbReference>
<dbReference type="NCBIfam" id="NF009489">
    <property type="entry name" value="PRK12851.1"/>
    <property type="match status" value="1"/>
</dbReference>
<dbReference type="PANTHER" id="PTHR45633">
    <property type="entry name" value="60 KDA HEAT SHOCK PROTEIN, MITOCHONDRIAL"/>
    <property type="match status" value="1"/>
</dbReference>
<dbReference type="Pfam" id="PF00118">
    <property type="entry name" value="Cpn60_TCP1"/>
    <property type="match status" value="1"/>
</dbReference>
<dbReference type="PRINTS" id="PR00298">
    <property type="entry name" value="CHAPERONIN60"/>
</dbReference>
<dbReference type="SUPFAM" id="SSF52029">
    <property type="entry name" value="GroEL apical domain-like"/>
    <property type="match status" value="1"/>
</dbReference>
<dbReference type="SUPFAM" id="SSF48592">
    <property type="entry name" value="GroEL equatorial domain-like"/>
    <property type="match status" value="1"/>
</dbReference>
<dbReference type="SUPFAM" id="SSF54849">
    <property type="entry name" value="GroEL-intermediate domain like"/>
    <property type="match status" value="1"/>
</dbReference>
<dbReference type="PROSITE" id="PS00296">
    <property type="entry name" value="CHAPERONINS_CPN60"/>
    <property type="match status" value="1"/>
</dbReference>
<gene>
    <name evidence="1" type="primary">groEL</name>
    <name evidence="1" type="synonym">groL</name>
    <name type="ordered locus">Sde_0884</name>
</gene>
<evidence type="ECO:0000255" key="1">
    <source>
        <dbReference type="HAMAP-Rule" id="MF_00600"/>
    </source>
</evidence>
<feature type="chain" id="PRO_0000256981" description="Chaperonin GroEL">
    <location>
        <begin position="1"/>
        <end position="547"/>
    </location>
</feature>
<feature type="binding site" evidence="1">
    <location>
        <begin position="29"/>
        <end position="32"/>
    </location>
    <ligand>
        <name>ATP</name>
        <dbReference type="ChEBI" id="CHEBI:30616"/>
    </ligand>
</feature>
<feature type="binding site" evidence="1">
    <location>
        <position position="50"/>
    </location>
    <ligand>
        <name>ATP</name>
        <dbReference type="ChEBI" id="CHEBI:30616"/>
    </ligand>
</feature>
<feature type="binding site" evidence="1">
    <location>
        <begin position="86"/>
        <end position="90"/>
    </location>
    <ligand>
        <name>ATP</name>
        <dbReference type="ChEBI" id="CHEBI:30616"/>
    </ligand>
</feature>
<feature type="binding site" evidence="1">
    <location>
        <position position="414"/>
    </location>
    <ligand>
        <name>ATP</name>
        <dbReference type="ChEBI" id="CHEBI:30616"/>
    </ligand>
</feature>
<feature type="binding site" evidence="1">
    <location>
        <begin position="478"/>
        <end position="480"/>
    </location>
    <ligand>
        <name>ATP</name>
        <dbReference type="ChEBI" id="CHEBI:30616"/>
    </ligand>
</feature>
<feature type="binding site" evidence="1">
    <location>
        <position position="494"/>
    </location>
    <ligand>
        <name>ATP</name>
        <dbReference type="ChEBI" id="CHEBI:30616"/>
    </ligand>
</feature>
<accession>Q21MD3</accession>
<proteinExistence type="inferred from homology"/>
<sequence>MAKIVKFGDEARQKMLAGVNVLADAVKTTLGPKGRNVVLDKSFGAPTVTKDGVSVAKEIELEDKFENMGAQMVKEVASKASDDAGDGTTTATVLAQAIVNEGLKSVAAGMNPMDLKRGIDKAVNAAVAHIKSIAQPCEDGKSIAQVGTISANSDSHVGDIIAEAMAKVGKEGVITVEEGSGLENELDVVEGMQFDRGYLSPYFINNQESMSVEIEQPYILLVDKKISNIRELLPVLEAVAKSGKPLVIVAEDVEGEALATLVVNNMRGIVKVTACKAPGFGDRRKAMLQDIAILTGGTVISEEVGLDLESATLEHLGSAKRVTMTKENSTIVDGAGVAADIESRVAQIRAQIEETSSDYDREKLQERVAKLAGGVAVIKVGAMTEVEMKEKKARVEDALHATRAAVEEGVVPGGGTALIRAAAAIADLKGDNEDQNAGIGIAIRALEAPLRQIVSNAGGEASVVADKVKNGEGNFGFNAASGEYGDMLEFGILDPAKVSRTAIQAAGSIAGLMITTEAMIADKPSEGGAAAPDMGGMGGMGGMGGMM</sequence>
<comment type="function">
    <text evidence="1">Together with its co-chaperonin GroES, plays an essential role in assisting protein folding. The GroEL-GroES system forms a nano-cage that allows encapsulation of the non-native substrate proteins and provides a physical environment optimized to promote and accelerate protein folding.</text>
</comment>
<comment type="catalytic activity">
    <reaction evidence="1">
        <text>ATP + H2O + a folded polypeptide = ADP + phosphate + an unfolded polypeptide.</text>
        <dbReference type="EC" id="5.6.1.7"/>
    </reaction>
</comment>
<comment type="subunit">
    <text evidence="1">Forms a cylinder of 14 subunits composed of two heptameric rings stacked back-to-back. Interacts with the co-chaperonin GroES.</text>
</comment>
<comment type="subcellular location">
    <subcellularLocation>
        <location evidence="1">Cytoplasm</location>
    </subcellularLocation>
</comment>
<comment type="similarity">
    <text evidence="1">Belongs to the chaperonin (HSP60) family.</text>
</comment>
<protein>
    <recommendedName>
        <fullName evidence="1">Chaperonin GroEL</fullName>
        <ecNumber evidence="1">5.6.1.7</ecNumber>
    </recommendedName>
    <alternativeName>
        <fullName evidence="1">60 kDa chaperonin</fullName>
    </alternativeName>
    <alternativeName>
        <fullName evidence="1">Chaperonin-60</fullName>
        <shortName evidence="1">Cpn60</shortName>
    </alternativeName>
</protein>
<name>CH60_SACD2</name>
<reference key="1">
    <citation type="journal article" date="2008" name="PLoS Genet.">
        <title>Complete genome sequence of the complex carbohydrate-degrading marine bacterium, Saccharophagus degradans strain 2-40 T.</title>
        <authorList>
            <person name="Weiner R.M."/>
            <person name="Taylor L.E. II"/>
            <person name="Henrissat B."/>
            <person name="Hauser L."/>
            <person name="Land M."/>
            <person name="Coutinho P.M."/>
            <person name="Rancurel C."/>
            <person name="Saunders E.H."/>
            <person name="Longmire A.G."/>
            <person name="Zhang H."/>
            <person name="Bayer E.A."/>
            <person name="Gilbert H.J."/>
            <person name="Larimer F."/>
            <person name="Zhulin I.B."/>
            <person name="Ekborg N.A."/>
            <person name="Lamed R."/>
            <person name="Richardson P.M."/>
            <person name="Borovok I."/>
            <person name="Hutcheson S."/>
        </authorList>
    </citation>
    <scope>NUCLEOTIDE SEQUENCE [LARGE SCALE GENOMIC DNA]</scope>
    <source>
        <strain>2-40 / ATCC 43961 / DSM 17024</strain>
    </source>
</reference>
<organism>
    <name type="scientific">Saccharophagus degradans (strain 2-40 / ATCC 43961 / DSM 17024)</name>
    <dbReference type="NCBI Taxonomy" id="203122"/>
    <lineage>
        <taxon>Bacteria</taxon>
        <taxon>Pseudomonadati</taxon>
        <taxon>Pseudomonadota</taxon>
        <taxon>Gammaproteobacteria</taxon>
        <taxon>Cellvibrionales</taxon>
        <taxon>Cellvibrionaceae</taxon>
        <taxon>Saccharophagus</taxon>
    </lineage>
</organism>
<keyword id="KW-0067">ATP-binding</keyword>
<keyword id="KW-0143">Chaperone</keyword>
<keyword id="KW-0963">Cytoplasm</keyword>
<keyword id="KW-0413">Isomerase</keyword>
<keyword id="KW-0547">Nucleotide-binding</keyword>
<keyword id="KW-1185">Reference proteome</keyword>